<keyword id="KW-0067">ATP-binding</keyword>
<keyword id="KW-0276">Fatty acid metabolism</keyword>
<keyword id="KW-0436">Ligase</keyword>
<keyword id="KW-0443">Lipid metabolism</keyword>
<keyword id="KW-0460">Magnesium</keyword>
<keyword id="KW-0479">Metal-binding</keyword>
<keyword id="KW-0496">Mitochondrion</keyword>
<keyword id="KW-0547">Nucleotide-binding</keyword>
<keyword id="KW-1185">Reference proteome</keyword>
<keyword id="KW-0809">Transit peptide</keyword>
<feature type="transit peptide" description="Mitochondrion" evidence="3">
    <location>
        <begin position="1"/>
        <end position="22"/>
    </location>
</feature>
<feature type="chain" id="PRO_0000306105" description="Acyl-coenzyme A synthetase ACSM4, mitochondrial">
    <location>
        <begin position="23"/>
        <end position="580"/>
    </location>
</feature>
<feature type="binding site" evidence="1">
    <location>
        <begin position="229"/>
        <end position="237"/>
    </location>
    <ligand>
        <name>ATP</name>
        <dbReference type="ChEBI" id="CHEBI:30616"/>
    </ligand>
</feature>
<feature type="binding site" evidence="1">
    <location>
        <begin position="368"/>
        <end position="373"/>
    </location>
    <ligand>
        <name>ATP</name>
        <dbReference type="ChEBI" id="CHEBI:30616"/>
    </ligand>
</feature>
<feature type="binding site" evidence="1">
    <location>
        <position position="455"/>
    </location>
    <ligand>
        <name>ATP</name>
        <dbReference type="ChEBI" id="CHEBI:30616"/>
    </ligand>
</feature>
<feature type="binding site" evidence="1">
    <location>
        <position position="470"/>
    </location>
    <ligand>
        <name>ATP</name>
        <dbReference type="ChEBI" id="CHEBI:30616"/>
    </ligand>
</feature>
<feature type="binding site" evidence="1">
    <location>
        <position position="566"/>
    </location>
    <ligand>
        <name>ATP</name>
        <dbReference type="ChEBI" id="CHEBI:30616"/>
    </ligand>
</feature>
<name>ACSM4_RAT</name>
<gene>
    <name type="primary">Acsm4</name>
    <name evidence="5" type="synonym">Omacs</name>
</gene>
<organism>
    <name type="scientific">Rattus norvegicus</name>
    <name type="common">Rat</name>
    <dbReference type="NCBI Taxonomy" id="10116"/>
    <lineage>
        <taxon>Eukaryota</taxon>
        <taxon>Metazoa</taxon>
        <taxon>Chordata</taxon>
        <taxon>Craniata</taxon>
        <taxon>Vertebrata</taxon>
        <taxon>Euteleostomi</taxon>
        <taxon>Mammalia</taxon>
        <taxon>Eutheria</taxon>
        <taxon>Euarchontoglires</taxon>
        <taxon>Glires</taxon>
        <taxon>Rodentia</taxon>
        <taxon>Myomorpha</taxon>
        <taxon>Muroidea</taxon>
        <taxon>Muridae</taxon>
        <taxon>Murinae</taxon>
        <taxon>Rattus</taxon>
    </lineage>
</organism>
<dbReference type="EC" id="6.2.1.2" evidence="4"/>
<dbReference type="EMBL" id="AB096688">
    <property type="protein sequence ID" value="BAC77614.1"/>
    <property type="molecule type" value="mRNA"/>
</dbReference>
<dbReference type="RefSeq" id="NP_859046.1">
    <property type="nucleotide sequence ID" value="NM_181695.2"/>
</dbReference>
<dbReference type="RefSeq" id="XP_017444802.1">
    <property type="nucleotide sequence ID" value="XM_017589313.1"/>
</dbReference>
<dbReference type="SMR" id="Q7TN78"/>
<dbReference type="FunCoup" id="Q7TN78">
    <property type="interactions" value="22"/>
</dbReference>
<dbReference type="STRING" id="10116.ENSRNOP00000031354"/>
<dbReference type="SwissLipids" id="SLP:000001211"/>
<dbReference type="PhosphoSitePlus" id="Q7TN78"/>
<dbReference type="PaxDb" id="10116-ENSRNOP00000031354"/>
<dbReference type="Ensembl" id="ENSRNOT00000034610.5">
    <property type="protein sequence ID" value="ENSRNOP00000031354.3"/>
    <property type="gene ID" value="ENSRNOG00000014726.6"/>
</dbReference>
<dbReference type="GeneID" id="353317"/>
<dbReference type="KEGG" id="rno:353317"/>
<dbReference type="UCSC" id="RGD:727928">
    <property type="organism name" value="rat"/>
</dbReference>
<dbReference type="AGR" id="RGD:727928"/>
<dbReference type="CTD" id="341392"/>
<dbReference type="RGD" id="727928">
    <property type="gene designation" value="Acsm4"/>
</dbReference>
<dbReference type="eggNOG" id="KOG1175">
    <property type="taxonomic scope" value="Eukaryota"/>
</dbReference>
<dbReference type="GeneTree" id="ENSGT00940000162316"/>
<dbReference type="HOGENOM" id="CLU_000022_59_10_1"/>
<dbReference type="InParanoid" id="Q7TN78"/>
<dbReference type="OMA" id="QLWTPLT"/>
<dbReference type="OrthoDB" id="10142at9989"/>
<dbReference type="PhylomeDB" id="Q7TN78"/>
<dbReference type="TreeFam" id="TF354287"/>
<dbReference type="Reactome" id="R-RNO-177128">
    <property type="pathway name" value="Conjugation of salicylate with glycine"/>
</dbReference>
<dbReference type="Reactome" id="R-RNO-9749641">
    <property type="pathway name" value="Aspirin ADME"/>
</dbReference>
<dbReference type="PRO" id="PR:Q7TN78"/>
<dbReference type="Proteomes" id="UP000002494">
    <property type="component" value="Chromosome 1"/>
</dbReference>
<dbReference type="GO" id="GO:0005759">
    <property type="term" value="C:mitochondrial matrix"/>
    <property type="evidence" value="ECO:0000318"/>
    <property type="project" value="GO_Central"/>
</dbReference>
<dbReference type="GO" id="GO:0005524">
    <property type="term" value="F:ATP binding"/>
    <property type="evidence" value="ECO:0007669"/>
    <property type="project" value="UniProtKB-KW"/>
</dbReference>
<dbReference type="GO" id="GO:0102391">
    <property type="term" value="F:decanoate-CoA ligase activity"/>
    <property type="evidence" value="ECO:0000314"/>
    <property type="project" value="UniProtKB"/>
</dbReference>
<dbReference type="GO" id="GO:0015645">
    <property type="term" value="F:fatty acid ligase activity"/>
    <property type="evidence" value="ECO:0000314"/>
    <property type="project" value="UniProtKB"/>
</dbReference>
<dbReference type="GO" id="GO:0004321">
    <property type="term" value="F:fatty-acyl-CoA synthase activity"/>
    <property type="evidence" value="ECO:0000314"/>
    <property type="project" value="RGD"/>
</dbReference>
<dbReference type="GO" id="GO:0046872">
    <property type="term" value="F:metal ion binding"/>
    <property type="evidence" value="ECO:0007669"/>
    <property type="project" value="UniProtKB-KW"/>
</dbReference>
<dbReference type="GO" id="GO:0005549">
    <property type="term" value="F:odorant binding"/>
    <property type="evidence" value="ECO:0000303"/>
    <property type="project" value="RGD"/>
</dbReference>
<dbReference type="GO" id="GO:0006637">
    <property type="term" value="P:acyl-CoA metabolic process"/>
    <property type="evidence" value="ECO:0000314"/>
    <property type="project" value="RGD"/>
</dbReference>
<dbReference type="GO" id="GO:0006633">
    <property type="term" value="P:fatty acid biosynthetic process"/>
    <property type="evidence" value="ECO:0000318"/>
    <property type="project" value="GO_Central"/>
</dbReference>
<dbReference type="CDD" id="cd05928">
    <property type="entry name" value="MACS_euk"/>
    <property type="match status" value="1"/>
</dbReference>
<dbReference type="FunFam" id="3.40.50.12780:FF:000007">
    <property type="entry name" value="Acyl-coenzyme A synthetase ACSM2A, mitochondrial"/>
    <property type="match status" value="1"/>
</dbReference>
<dbReference type="FunFam" id="3.30.300.30:FF:000005">
    <property type="entry name" value="Acyl-coenzyme A synthetase ACSM5, mitochondrial"/>
    <property type="match status" value="1"/>
</dbReference>
<dbReference type="Gene3D" id="3.30.300.30">
    <property type="match status" value="1"/>
</dbReference>
<dbReference type="Gene3D" id="3.40.50.12780">
    <property type="entry name" value="N-terminal domain of ligase-like"/>
    <property type="match status" value="1"/>
</dbReference>
<dbReference type="InterPro" id="IPR025110">
    <property type="entry name" value="AMP-bd_C"/>
</dbReference>
<dbReference type="InterPro" id="IPR045851">
    <property type="entry name" value="AMP-bd_C_sf"/>
</dbReference>
<dbReference type="InterPro" id="IPR020845">
    <property type="entry name" value="AMP-binding_CS"/>
</dbReference>
<dbReference type="InterPro" id="IPR000873">
    <property type="entry name" value="AMP-dep_synth/lig_dom"/>
</dbReference>
<dbReference type="InterPro" id="IPR042099">
    <property type="entry name" value="ANL_N_sf"/>
</dbReference>
<dbReference type="InterPro" id="IPR051087">
    <property type="entry name" value="Mitochondrial_ACSM"/>
</dbReference>
<dbReference type="PANTHER" id="PTHR43605">
    <property type="entry name" value="ACYL-COENZYME A SYNTHETASE"/>
    <property type="match status" value="1"/>
</dbReference>
<dbReference type="PANTHER" id="PTHR43605:SF8">
    <property type="entry name" value="ACYL-COENZYME A SYNTHETASE ACSM4, MITOCHONDRIAL"/>
    <property type="match status" value="1"/>
</dbReference>
<dbReference type="Pfam" id="PF00501">
    <property type="entry name" value="AMP-binding"/>
    <property type="match status" value="1"/>
</dbReference>
<dbReference type="Pfam" id="PF13193">
    <property type="entry name" value="AMP-binding_C"/>
    <property type="match status" value="1"/>
</dbReference>
<dbReference type="SUPFAM" id="SSF56801">
    <property type="entry name" value="Acetyl-CoA synthetase-like"/>
    <property type="match status" value="1"/>
</dbReference>
<dbReference type="PROSITE" id="PS00455">
    <property type="entry name" value="AMP_BINDING"/>
    <property type="match status" value="1"/>
</dbReference>
<comment type="function">
    <text evidence="4">Catalyzes the activation of fatty acids by CoA to produce an acyl-CoA, the first step in fatty acid metabolism (PubMed:12709059). Capable of activating medium-chain fatty acids with a preference for C6-12 fatty acids (PubMed:12709059).</text>
</comment>
<comment type="catalytic activity">
    <reaction evidence="4">
        <text>a medium-chain fatty acid + ATP + CoA = a medium-chain fatty acyl-CoA + AMP + diphosphate</text>
        <dbReference type="Rhea" id="RHEA:48340"/>
        <dbReference type="ChEBI" id="CHEBI:30616"/>
        <dbReference type="ChEBI" id="CHEBI:33019"/>
        <dbReference type="ChEBI" id="CHEBI:57287"/>
        <dbReference type="ChEBI" id="CHEBI:59558"/>
        <dbReference type="ChEBI" id="CHEBI:90546"/>
        <dbReference type="ChEBI" id="CHEBI:456215"/>
        <dbReference type="EC" id="6.2.1.2"/>
    </reaction>
    <physiologicalReaction direction="left-to-right" evidence="7">
        <dbReference type="Rhea" id="RHEA:48341"/>
    </physiologicalReaction>
</comment>
<comment type="catalytic activity">
    <reaction evidence="4">
        <text>hexanoate + ATP + CoA = hexanoyl-CoA + AMP + diphosphate</text>
        <dbReference type="Rhea" id="RHEA:43740"/>
        <dbReference type="ChEBI" id="CHEBI:17120"/>
        <dbReference type="ChEBI" id="CHEBI:30616"/>
        <dbReference type="ChEBI" id="CHEBI:33019"/>
        <dbReference type="ChEBI" id="CHEBI:57287"/>
        <dbReference type="ChEBI" id="CHEBI:62620"/>
        <dbReference type="ChEBI" id="CHEBI:456215"/>
    </reaction>
    <physiologicalReaction direction="left-to-right" evidence="7">
        <dbReference type="Rhea" id="RHEA:43741"/>
    </physiologicalReaction>
</comment>
<comment type="catalytic activity">
    <reaction evidence="4">
        <text>octanoate + ATP + CoA = octanoyl-CoA + AMP + diphosphate</text>
        <dbReference type="Rhea" id="RHEA:33631"/>
        <dbReference type="ChEBI" id="CHEBI:25646"/>
        <dbReference type="ChEBI" id="CHEBI:30616"/>
        <dbReference type="ChEBI" id="CHEBI:33019"/>
        <dbReference type="ChEBI" id="CHEBI:57287"/>
        <dbReference type="ChEBI" id="CHEBI:57386"/>
        <dbReference type="ChEBI" id="CHEBI:456215"/>
    </reaction>
    <physiologicalReaction direction="left-to-right" evidence="7">
        <dbReference type="Rhea" id="RHEA:33632"/>
    </physiologicalReaction>
</comment>
<comment type="catalytic activity">
    <reaction evidence="4">
        <text>decanoate + ATP + CoA = decanoyl-CoA + AMP + diphosphate</text>
        <dbReference type="Rhea" id="RHEA:33627"/>
        <dbReference type="ChEBI" id="CHEBI:27689"/>
        <dbReference type="ChEBI" id="CHEBI:30616"/>
        <dbReference type="ChEBI" id="CHEBI:33019"/>
        <dbReference type="ChEBI" id="CHEBI:57287"/>
        <dbReference type="ChEBI" id="CHEBI:61430"/>
        <dbReference type="ChEBI" id="CHEBI:456215"/>
    </reaction>
    <physiologicalReaction direction="left-to-right" evidence="7">
        <dbReference type="Rhea" id="RHEA:33628"/>
    </physiologicalReaction>
</comment>
<comment type="catalytic activity">
    <reaction evidence="4">
        <text>dodecanoate + ATP + CoA = dodecanoyl-CoA + AMP + diphosphate</text>
        <dbReference type="Rhea" id="RHEA:33623"/>
        <dbReference type="ChEBI" id="CHEBI:18262"/>
        <dbReference type="ChEBI" id="CHEBI:30616"/>
        <dbReference type="ChEBI" id="CHEBI:33019"/>
        <dbReference type="ChEBI" id="CHEBI:57287"/>
        <dbReference type="ChEBI" id="CHEBI:57375"/>
        <dbReference type="ChEBI" id="CHEBI:456215"/>
    </reaction>
    <physiologicalReaction direction="left-to-right" evidence="7">
        <dbReference type="Rhea" id="RHEA:33624"/>
    </physiologicalReaction>
</comment>
<comment type="cofactor">
    <cofactor evidence="2">
        <name>Mg(2+)</name>
        <dbReference type="ChEBI" id="CHEBI:18420"/>
    </cofactor>
    <cofactor evidence="2">
        <name>Mn(2+)</name>
        <dbReference type="ChEBI" id="CHEBI:29035"/>
    </cofactor>
</comment>
<comment type="subcellular location">
    <subcellularLocation>
        <location evidence="4">Mitochondrion</location>
    </subcellularLocation>
</comment>
<comment type="tissue specificity">
    <text evidence="4">Detected in adult olfactory epithelium.</text>
</comment>
<comment type="developmental stage">
    <text evidence="4">Detected in all cell layers of the dorso-medial part of the embryonic olfactory placode and olfactory epithelium. First detected in olfactory placode on embryonic day 11.5. Detected in olfactory placode on embryonic day 12, 14, 16 and 18.</text>
</comment>
<comment type="similarity">
    <text evidence="6">Belongs to the ATP-dependent AMP-binding enzyme family.</text>
</comment>
<sequence length="580" mass="65317">MKVLLRCQRLRFIWLAKPAGRHFHRDPQLWAPLTLDDFEAINRCEKPLPKNFNFAADVLDQWSLKEKSGERPANPALWWVNGKGDEVKWSFQELGSLSRKAANVLTKPCGLQRGDRVAVILPRIPEWWLINVACMRTGLVFMPGTIQLTRKDILYRLQASKAKCIVASEEVAPAVDSIASECPNLKTKLLVSPHRWDGWLSFQELLQSASEEHNCVQTGSQEPMAIYFTSGTTGSPKMAQHSQSSLGIGYALCGRYWLDLTSSDIMWNMSDTGWIKAAIGSVFSTWLRGACVFVHRMAQFNTDTFLDTLTSYPITTLCSAPTVYRMLVQQDLKRYQFKRLRHCLTGGEPLNPEVLEQWKAQTGLELYEGYGQTEVGIICANRKGEEIKPGSMGKGVVPYDVQIIDEHGNILPSGKEGEIALRLGSDRPFCFFSEYVDNPEKTDATIRRNFYITGDRGVMDDDGYLWFVGRADDVIISSGYRIGPFEVESALIEHPAVVESAVVSSPDPIRGEVVKAFIVLAAPFKSSNREKLTAELQDHVKNSTAPYKYPRKVEFVQELPKTITGKIKRNVLRDQEWGRA</sequence>
<evidence type="ECO:0000250" key="1"/>
<evidence type="ECO:0000250" key="2">
    <source>
        <dbReference type="UniProtKB" id="Q08AH1"/>
    </source>
</evidence>
<evidence type="ECO:0000255" key="3"/>
<evidence type="ECO:0000269" key="4">
    <source>
    </source>
</evidence>
<evidence type="ECO:0000303" key="5">
    <source>
    </source>
</evidence>
<evidence type="ECO:0000305" key="6"/>
<evidence type="ECO:0000305" key="7">
    <source>
    </source>
</evidence>
<accession>Q7TN78</accession>
<proteinExistence type="evidence at protein level"/>
<reference key="1">
    <citation type="journal article" date="2003" name="Eur. J. Biochem.">
        <title>O-MACS, a novel member of the medium-chain acyl-CoA synthetase family, specifically expressed in the olfactory epithelium in a zone-specific manner.</title>
        <authorList>
            <person name="Oka Y."/>
            <person name="Kobayakawa K."/>
            <person name="Nishizumi H."/>
            <person name="Miyamichi K."/>
            <person name="Hirose S."/>
            <person name="Tsuboi A."/>
            <person name="Sakano H."/>
        </authorList>
    </citation>
    <scope>NUCLEOTIDE SEQUENCE [MRNA]</scope>
    <scope>FUNCTION</scope>
    <scope>CATALYTIC ACTIVITY</scope>
    <scope>SUBCELLULAR LOCATION</scope>
    <scope>DEVELOPMENTAL STAGE</scope>
    <scope>TISSUE SPECIFICITY</scope>
    <source>
        <strain>Wistar</strain>
        <tissue>Olfactory epithelium</tissue>
    </source>
</reference>
<protein>
    <recommendedName>
        <fullName>Acyl-coenzyme A synthetase ACSM4, mitochondrial</fullName>
        <ecNumber evidence="4">6.2.1.2</ecNumber>
    </recommendedName>
    <alternativeName>
        <fullName evidence="5">Olfactory specific medium-chain acyl CoA synthetase</fullName>
        <shortName evidence="5">O-MACS</shortName>
    </alternativeName>
</protein>